<name>QUEC_CAUSK</name>
<feature type="chain" id="PRO_0000336903" description="7-cyano-7-deazaguanine synthase">
    <location>
        <begin position="1"/>
        <end position="250"/>
    </location>
</feature>
<feature type="binding site" evidence="1">
    <location>
        <begin position="21"/>
        <end position="31"/>
    </location>
    <ligand>
        <name>ATP</name>
        <dbReference type="ChEBI" id="CHEBI:30616"/>
    </ligand>
</feature>
<feature type="binding site" evidence="1">
    <location>
        <position position="209"/>
    </location>
    <ligand>
        <name>Zn(2+)</name>
        <dbReference type="ChEBI" id="CHEBI:29105"/>
    </ligand>
</feature>
<feature type="binding site" evidence="1">
    <location>
        <position position="224"/>
    </location>
    <ligand>
        <name>Zn(2+)</name>
        <dbReference type="ChEBI" id="CHEBI:29105"/>
    </ligand>
</feature>
<feature type="binding site" evidence="1">
    <location>
        <position position="227"/>
    </location>
    <ligand>
        <name>Zn(2+)</name>
        <dbReference type="ChEBI" id="CHEBI:29105"/>
    </ligand>
</feature>
<feature type="binding site" evidence="1">
    <location>
        <position position="230"/>
    </location>
    <ligand>
        <name>Zn(2+)</name>
        <dbReference type="ChEBI" id="CHEBI:29105"/>
    </ligand>
</feature>
<keyword id="KW-0067">ATP-binding</keyword>
<keyword id="KW-0436">Ligase</keyword>
<keyword id="KW-0479">Metal-binding</keyword>
<keyword id="KW-0547">Nucleotide-binding</keyword>
<keyword id="KW-0671">Queuosine biosynthesis</keyword>
<keyword id="KW-0862">Zinc</keyword>
<sequence>MSTSPLSPVASSRADAALVLFSGGQDSSVCLAWALERYARVETVGFDYGQRHHIEMEARVAVRHQVAERFPHWARRLGEDHVLDLTGFGAVAHSALTADVAIEMTERGLPSTFVPGRNLVFLIYAAALADRRGLGALVGGMCETDFSGYPDCRRDTLDAMQSALNLGMDRDFVIETPLMKLTKAQTWALAKSLGGEDLVDLIVVESHTCYQGERGDLHPWGHGCGECPACELRRRGYEEWDAAGREALGA</sequence>
<proteinExistence type="inferred from homology"/>
<organism>
    <name type="scientific">Caulobacter sp. (strain K31)</name>
    <dbReference type="NCBI Taxonomy" id="366602"/>
    <lineage>
        <taxon>Bacteria</taxon>
        <taxon>Pseudomonadati</taxon>
        <taxon>Pseudomonadota</taxon>
        <taxon>Alphaproteobacteria</taxon>
        <taxon>Caulobacterales</taxon>
        <taxon>Caulobacteraceae</taxon>
        <taxon>Caulobacter</taxon>
    </lineage>
</organism>
<gene>
    <name evidence="1" type="primary">queC</name>
    <name type="ordered locus">Caul_1081</name>
</gene>
<comment type="function">
    <text evidence="1">Catalyzes the ATP-dependent conversion of 7-carboxy-7-deazaguanine (CDG) to 7-cyano-7-deazaguanine (preQ(0)).</text>
</comment>
<comment type="catalytic activity">
    <reaction evidence="1">
        <text>7-carboxy-7-deazaguanine + NH4(+) + ATP = 7-cyano-7-deazaguanine + ADP + phosphate + H2O + H(+)</text>
        <dbReference type="Rhea" id="RHEA:27982"/>
        <dbReference type="ChEBI" id="CHEBI:15377"/>
        <dbReference type="ChEBI" id="CHEBI:15378"/>
        <dbReference type="ChEBI" id="CHEBI:28938"/>
        <dbReference type="ChEBI" id="CHEBI:30616"/>
        <dbReference type="ChEBI" id="CHEBI:43474"/>
        <dbReference type="ChEBI" id="CHEBI:45075"/>
        <dbReference type="ChEBI" id="CHEBI:61036"/>
        <dbReference type="ChEBI" id="CHEBI:456216"/>
        <dbReference type="EC" id="6.3.4.20"/>
    </reaction>
</comment>
<comment type="cofactor">
    <cofactor evidence="1">
        <name>Zn(2+)</name>
        <dbReference type="ChEBI" id="CHEBI:29105"/>
    </cofactor>
    <text evidence="1">Binds 1 zinc ion per subunit.</text>
</comment>
<comment type="pathway">
    <text evidence="1">Purine metabolism; 7-cyano-7-deazaguanine biosynthesis.</text>
</comment>
<comment type="similarity">
    <text evidence="1">Belongs to the QueC family.</text>
</comment>
<accession>B0SX50</accession>
<evidence type="ECO:0000255" key="1">
    <source>
        <dbReference type="HAMAP-Rule" id="MF_01633"/>
    </source>
</evidence>
<reference key="1">
    <citation type="submission" date="2008-01" db="EMBL/GenBank/DDBJ databases">
        <title>Complete sequence of chromosome of Caulobacter sp. K31.</title>
        <authorList>
            <consortium name="US DOE Joint Genome Institute"/>
            <person name="Copeland A."/>
            <person name="Lucas S."/>
            <person name="Lapidus A."/>
            <person name="Barry K."/>
            <person name="Glavina del Rio T."/>
            <person name="Dalin E."/>
            <person name="Tice H."/>
            <person name="Pitluck S."/>
            <person name="Bruce D."/>
            <person name="Goodwin L."/>
            <person name="Thompson L.S."/>
            <person name="Brettin T."/>
            <person name="Detter J.C."/>
            <person name="Han C."/>
            <person name="Schmutz J."/>
            <person name="Larimer F."/>
            <person name="Land M."/>
            <person name="Hauser L."/>
            <person name="Kyrpides N."/>
            <person name="Kim E."/>
            <person name="Stephens C."/>
            <person name="Richardson P."/>
        </authorList>
    </citation>
    <scope>NUCLEOTIDE SEQUENCE [LARGE SCALE GENOMIC DNA]</scope>
    <source>
        <strain>K31</strain>
    </source>
</reference>
<dbReference type="EC" id="6.3.4.20" evidence="1"/>
<dbReference type="EMBL" id="CP000927">
    <property type="protein sequence ID" value="ABZ70211.1"/>
    <property type="molecule type" value="Genomic_DNA"/>
</dbReference>
<dbReference type="SMR" id="B0SX50"/>
<dbReference type="STRING" id="366602.Caul_1081"/>
<dbReference type="KEGG" id="cak:Caul_1081"/>
<dbReference type="eggNOG" id="COG0603">
    <property type="taxonomic scope" value="Bacteria"/>
</dbReference>
<dbReference type="HOGENOM" id="CLU_081854_0_0_5"/>
<dbReference type="OrthoDB" id="9789567at2"/>
<dbReference type="UniPathway" id="UPA00391"/>
<dbReference type="GO" id="GO:0005524">
    <property type="term" value="F:ATP binding"/>
    <property type="evidence" value="ECO:0007669"/>
    <property type="project" value="UniProtKB-UniRule"/>
</dbReference>
<dbReference type="GO" id="GO:0016879">
    <property type="term" value="F:ligase activity, forming carbon-nitrogen bonds"/>
    <property type="evidence" value="ECO:0007669"/>
    <property type="project" value="UniProtKB-UniRule"/>
</dbReference>
<dbReference type="GO" id="GO:0008270">
    <property type="term" value="F:zinc ion binding"/>
    <property type="evidence" value="ECO:0007669"/>
    <property type="project" value="UniProtKB-UniRule"/>
</dbReference>
<dbReference type="GO" id="GO:0008616">
    <property type="term" value="P:queuosine biosynthetic process"/>
    <property type="evidence" value="ECO:0007669"/>
    <property type="project" value="UniProtKB-UniRule"/>
</dbReference>
<dbReference type="CDD" id="cd01995">
    <property type="entry name" value="QueC-like"/>
    <property type="match status" value="1"/>
</dbReference>
<dbReference type="Gene3D" id="3.40.50.620">
    <property type="entry name" value="HUPs"/>
    <property type="match status" value="1"/>
</dbReference>
<dbReference type="HAMAP" id="MF_01633">
    <property type="entry name" value="QueC"/>
    <property type="match status" value="1"/>
</dbReference>
<dbReference type="InterPro" id="IPR018317">
    <property type="entry name" value="QueC"/>
</dbReference>
<dbReference type="InterPro" id="IPR014729">
    <property type="entry name" value="Rossmann-like_a/b/a_fold"/>
</dbReference>
<dbReference type="NCBIfam" id="TIGR00364">
    <property type="entry name" value="7-cyano-7-deazaguanine synthase QueC"/>
    <property type="match status" value="1"/>
</dbReference>
<dbReference type="PANTHER" id="PTHR42914">
    <property type="entry name" value="7-CYANO-7-DEAZAGUANINE SYNTHASE"/>
    <property type="match status" value="1"/>
</dbReference>
<dbReference type="PANTHER" id="PTHR42914:SF1">
    <property type="entry name" value="7-CYANO-7-DEAZAGUANINE SYNTHASE"/>
    <property type="match status" value="1"/>
</dbReference>
<dbReference type="Pfam" id="PF06508">
    <property type="entry name" value="QueC"/>
    <property type="match status" value="1"/>
</dbReference>
<dbReference type="PIRSF" id="PIRSF006293">
    <property type="entry name" value="ExsB"/>
    <property type="match status" value="1"/>
</dbReference>
<dbReference type="SUPFAM" id="SSF52402">
    <property type="entry name" value="Adenine nucleotide alpha hydrolases-like"/>
    <property type="match status" value="1"/>
</dbReference>
<protein>
    <recommendedName>
        <fullName evidence="1">7-cyano-7-deazaguanine synthase</fullName>
        <ecNumber evidence="1">6.3.4.20</ecNumber>
    </recommendedName>
    <alternativeName>
        <fullName evidence="1">7-cyano-7-carbaguanine synthase</fullName>
    </alternativeName>
    <alternativeName>
        <fullName evidence="1">PreQ(0) synthase</fullName>
    </alternativeName>
    <alternativeName>
        <fullName evidence="1">Queuosine biosynthesis protein QueC</fullName>
    </alternativeName>
</protein>